<proteinExistence type="inferred from homology"/>
<evidence type="ECO:0000255" key="1">
    <source>
        <dbReference type="HAMAP-Rule" id="MF_01358"/>
    </source>
</evidence>
<protein>
    <recommendedName>
        <fullName evidence="1">NADH-quinone oxidoreductase subunit D 1</fullName>
        <ecNumber evidence="1">7.1.1.-</ecNumber>
    </recommendedName>
    <alternativeName>
        <fullName evidence="1">NADH dehydrogenase I subunit D 1</fullName>
    </alternativeName>
    <alternativeName>
        <fullName evidence="1">NDH-1 subunit D 1</fullName>
    </alternativeName>
</protein>
<keyword id="KW-0997">Cell inner membrane</keyword>
<keyword id="KW-1003">Cell membrane</keyword>
<keyword id="KW-0472">Membrane</keyword>
<keyword id="KW-0520">NAD</keyword>
<keyword id="KW-0874">Quinone</keyword>
<keyword id="KW-1185">Reference proteome</keyword>
<keyword id="KW-1278">Translocase</keyword>
<keyword id="KW-0813">Transport</keyword>
<gene>
    <name evidence="1" type="primary">nuoD1</name>
    <name type="ordered locus">CHU_0512</name>
</gene>
<feature type="chain" id="PRO_0000357802" description="NADH-quinone oxidoreductase subunit D 1">
    <location>
        <begin position="1"/>
        <end position="392"/>
    </location>
</feature>
<name>NUOD1_CYTH3</name>
<reference key="1">
    <citation type="journal article" date="2007" name="Appl. Environ. Microbiol.">
        <title>Genome sequence of the cellulolytic gliding bacterium Cytophaga hutchinsonii.</title>
        <authorList>
            <person name="Xie G."/>
            <person name="Bruce D.C."/>
            <person name="Challacombe J.F."/>
            <person name="Chertkov O."/>
            <person name="Detter J.C."/>
            <person name="Gilna P."/>
            <person name="Han C.S."/>
            <person name="Lucas S."/>
            <person name="Misra M."/>
            <person name="Myers G.L."/>
            <person name="Richardson P."/>
            <person name="Tapia R."/>
            <person name="Thayer N."/>
            <person name="Thompson L.S."/>
            <person name="Brettin T.S."/>
            <person name="Henrissat B."/>
            <person name="Wilson D.B."/>
            <person name="McBride M.J."/>
        </authorList>
    </citation>
    <scope>NUCLEOTIDE SEQUENCE [LARGE SCALE GENOMIC DNA]</scope>
    <source>
        <strain>ATCC 33406 / DSM 1761 / JCM 20678 / CIP 103989 / IAM 12607 / NBRC 15051 / NCIMB 9469 / D465</strain>
    </source>
</reference>
<dbReference type="EC" id="7.1.1.-" evidence="1"/>
<dbReference type="EMBL" id="CP000383">
    <property type="protein sequence ID" value="ABG57800.1"/>
    <property type="molecule type" value="Genomic_DNA"/>
</dbReference>
<dbReference type="RefSeq" id="WP_011583916.1">
    <property type="nucleotide sequence ID" value="NC_008255.1"/>
</dbReference>
<dbReference type="SMR" id="Q11XR6"/>
<dbReference type="STRING" id="269798.CHU_0512"/>
<dbReference type="KEGG" id="chu:CHU_0512"/>
<dbReference type="eggNOG" id="COG0649">
    <property type="taxonomic scope" value="Bacteria"/>
</dbReference>
<dbReference type="HOGENOM" id="CLU_015134_1_2_10"/>
<dbReference type="OrthoDB" id="9801496at2"/>
<dbReference type="Proteomes" id="UP000001822">
    <property type="component" value="Chromosome"/>
</dbReference>
<dbReference type="GO" id="GO:0005886">
    <property type="term" value="C:plasma membrane"/>
    <property type="evidence" value="ECO:0007669"/>
    <property type="project" value="UniProtKB-SubCell"/>
</dbReference>
<dbReference type="GO" id="GO:0051287">
    <property type="term" value="F:NAD binding"/>
    <property type="evidence" value="ECO:0007669"/>
    <property type="project" value="InterPro"/>
</dbReference>
<dbReference type="GO" id="GO:0050136">
    <property type="term" value="F:NADH:ubiquinone reductase (non-electrogenic) activity"/>
    <property type="evidence" value="ECO:0007669"/>
    <property type="project" value="UniProtKB-UniRule"/>
</dbReference>
<dbReference type="GO" id="GO:0048038">
    <property type="term" value="F:quinone binding"/>
    <property type="evidence" value="ECO:0007669"/>
    <property type="project" value="UniProtKB-KW"/>
</dbReference>
<dbReference type="Gene3D" id="1.10.645.10">
    <property type="entry name" value="Cytochrome-c3 Hydrogenase, chain B"/>
    <property type="match status" value="1"/>
</dbReference>
<dbReference type="HAMAP" id="MF_01358">
    <property type="entry name" value="NDH1_NuoD"/>
    <property type="match status" value="1"/>
</dbReference>
<dbReference type="InterPro" id="IPR001135">
    <property type="entry name" value="NADH_Q_OxRdtase_suD"/>
</dbReference>
<dbReference type="InterPro" id="IPR022885">
    <property type="entry name" value="NDH1_su_D/H"/>
</dbReference>
<dbReference type="InterPro" id="IPR029014">
    <property type="entry name" value="NiFe-Hase_large"/>
</dbReference>
<dbReference type="NCBIfam" id="NF004739">
    <property type="entry name" value="PRK06075.1"/>
    <property type="match status" value="1"/>
</dbReference>
<dbReference type="PANTHER" id="PTHR11993:SF10">
    <property type="entry name" value="NADH DEHYDROGENASE [UBIQUINONE] IRON-SULFUR PROTEIN 2, MITOCHONDRIAL"/>
    <property type="match status" value="1"/>
</dbReference>
<dbReference type="PANTHER" id="PTHR11993">
    <property type="entry name" value="NADH-UBIQUINONE OXIDOREDUCTASE 49 KDA SUBUNIT"/>
    <property type="match status" value="1"/>
</dbReference>
<dbReference type="Pfam" id="PF00346">
    <property type="entry name" value="Complex1_49kDa"/>
    <property type="match status" value="1"/>
</dbReference>
<dbReference type="SUPFAM" id="SSF56762">
    <property type="entry name" value="HydB/Nqo4-like"/>
    <property type="match status" value="1"/>
</dbReference>
<accession>Q11XR6</accession>
<organism>
    <name type="scientific">Cytophaga hutchinsonii (strain ATCC 33406 / DSM 1761 / CIP 103989 / NBRC 15051 / NCIMB 9469 / D465)</name>
    <dbReference type="NCBI Taxonomy" id="269798"/>
    <lineage>
        <taxon>Bacteria</taxon>
        <taxon>Pseudomonadati</taxon>
        <taxon>Bacteroidota</taxon>
        <taxon>Cytophagia</taxon>
        <taxon>Cytophagales</taxon>
        <taxon>Cytophagaceae</taxon>
        <taxon>Cytophaga</taxon>
    </lineage>
</organism>
<sequence length="392" mass="44600">MESSEPLVLDVGNLKRGEIIINMGPQHPSTHGVLRLEILTDGEIVKDVIPHMGYLHRCYEKHAEKLPYNQVIPFVDRMDYLAAMNSEHAYAMGVERMLGIENDIPKRVEYIRVLVAELNRISSHFVAIGTYGLDIGAFTPFLWVMRDREHINRLLEWVSGARMLYNYIWVGGLFYDLPVGFEERCKDFISYLKPKLAELQKVIIDNKIFIERTANIGVLPLDLAINYGITGPMLRASGLKFDLRKVDAYSVYPEIDFDIPVGTGAVGTTGDCWDRTHVRVAECFESVKIIEQCLEKLLGEHKRTREFDPQAIVPKKIRPKVMDFYVRAENPKGELGFFFRTTGNTDIPFRCKVRAPSFVNLSVLQAISKNVMIADLVAILGSFDIVMGEIDR</sequence>
<comment type="function">
    <text evidence="1">NDH-1 shuttles electrons from NADH, via FMN and iron-sulfur (Fe-S) centers, to quinones in the respiratory chain. The immediate electron acceptor for the enzyme in this species is believed to be a menaquinone. Couples the redox reaction to proton translocation (for every two electrons transferred, four hydrogen ions are translocated across the cytoplasmic membrane), and thus conserves the redox energy in a proton gradient.</text>
</comment>
<comment type="catalytic activity">
    <reaction evidence="1">
        <text>a quinone + NADH + 5 H(+)(in) = a quinol + NAD(+) + 4 H(+)(out)</text>
        <dbReference type="Rhea" id="RHEA:57888"/>
        <dbReference type="ChEBI" id="CHEBI:15378"/>
        <dbReference type="ChEBI" id="CHEBI:24646"/>
        <dbReference type="ChEBI" id="CHEBI:57540"/>
        <dbReference type="ChEBI" id="CHEBI:57945"/>
        <dbReference type="ChEBI" id="CHEBI:132124"/>
    </reaction>
</comment>
<comment type="subunit">
    <text evidence="1">NDH-1 is composed of 14 different subunits. Subunits NuoB, C, D, E, F, and G constitute the peripheral sector of the complex.</text>
</comment>
<comment type="subcellular location">
    <subcellularLocation>
        <location evidence="1">Cell inner membrane</location>
        <topology evidence="1">Peripheral membrane protein</topology>
        <orientation evidence="1">Cytoplasmic side</orientation>
    </subcellularLocation>
</comment>
<comment type="similarity">
    <text evidence="1">Belongs to the complex I 49 kDa subunit family.</text>
</comment>